<name>IL16_MACFA</name>
<dbReference type="EMBL" id="AF017108">
    <property type="protein sequence ID" value="AAC16036.1"/>
    <property type="molecule type" value="Genomic_DNA"/>
</dbReference>
<dbReference type="SMR" id="O62676"/>
<dbReference type="STRING" id="9541.ENSMFAP00000017873"/>
<dbReference type="eggNOG" id="KOG3528">
    <property type="taxonomic scope" value="Eukaryota"/>
</dbReference>
<dbReference type="Proteomes" id="UP000233100">
    <property type="component" value="Unplaced"/>
</dbReference>
<dbReference type="GO" id="GO:0005737">
    <property type="term" value="C:cytoplasm"/>
    <property type="evidence" value="ECO:0007669"/>
    <property type="project" value="UniProtKB-SubCell"/>
</dbReference>
<dbReference type="GO" id="GO:0005615">
    <property type="term" value="C:extracellular space"/>
    <property type="evidence" value="ECO:0007669"/>
    <property type="project" value="UniProtKB-KW"/>
</dbReference>
<dbReference type="GO" id="GO:0005634">
    <property type="term" value="C:nucleus"/>
    <property type="evidence" value="ECO:0007669"/>
    <property type="project" value="UniProtKB-SubCell"/>
</dbReference>
<dbReference type="GO" id="GO:0042609">
    <property type="term" value="F:CD4 receptor binding"/>
    <property type="evidence" value="ECO:0007669"/>
    <property type="project" value="TreeGrafter"/>
</dbReference>
<dbReference type="GO" id="GO:0005125">
    <property type="term" value="F:cytokine activity"/>
    <property type="evidence" value="ECO:0007669"/>
    <property type="project" value="UniProtKB-KW"/>
</dbReference>
<dbReference type="GO" id="GO:0050930">
    <property type="term" value="P:induction of positive chemotaxis"/>
    <property type="evidence" value="ECO:0007669"/>
    <property type="project" value="InterPro"/>
</dbReference>
<dbReference type="GO" id="GO:0030595">
    <property type="term" value="P:leukocyte chemotaxis"/>
    <property type="evidence" value="ECO:0007669"/>
    <property type="project" value="TreeGrafter"/>
</dbReference>
<dbReference type="CDD" id="cd06762">
    <property type="entry name" value="PDZ6_PDZD2-PDZ3_hPro-IL-16-like"/>
    <property type="match status" value="1"/>
</dbReference>
<dbReference type="CDD" id="cd06763">
    <property type="entry name" value="PDZ7_PDZD2-PDZ4_hPro-IL-16-like"/>
    <property type="match status" value="1"/>
</dbReference>
<dbReference type="FunFam" id="2.30.42.10:FF:000122">
    <property type="entry name" value="Pro-interleukin-16"/>
    <property type="match status" value="1"/>
</dbReference>
<dbReference type="FunFam" id="2.30.42.10:FF:000147">
    <property type="entry name" value="Pro-interleukin-16"/>
    <property type="match status" value="1"/>
</dbReference>
<dbReference type="Gene3D" id="2.30.42.10">
    <property type="match status" value="2"/>
</dbReference>
<dbReference type="InterPro" id="IPR020450">
    <property type="entry name" value="IL-16"/>
</dbReference>
<dbReference type="InterPro" id="IPR055287">
    <property type="entry name" value="IL-16-like"/>
</dbReference>
<dbReference type="InterPro" id="IPR001478">
    <property type="entry name" value="PDZ"/>
</dbReference>
<dbReference type="InterPro" id="IPR036034">
    <property type="entry name" value="PDZ_sf"/>
</dbReference>
<dbReference type="PANTHER" id="PTHR48484">
    <property type="entry name" value="PRO-INTERLEUKIN-16"/>
    <property type="match status" value="1"/>
</dbReference>
<dbReference type="PANTHER" id="PTHR48484:SF2">
    <property type="entry name" value="PRO-INTERLEUKIN-16"/>
    <property type="match status" value="1"/>
</dbReference>
<dbReference type="Pfam" id="PF00595">
    <property type="entry name" value="PDZ"/>
    <property type="match status" value="2"/>
</dbReference>
<dbReference type="PRINTS" id="PR01931">
    <property type="entry name" value="INTRLEUKIN16"/>
</dbReference>
<dbReference type="SMART" id="SM00228">
    <property type="entry name" value="PDZ"/>
    <property type="match status" value="2"/>
</dbReference>
<dbReference type="SUPFAM" id="SSF50156">
    <property type="entry name" value="PDZ domain-like"/>
    <property type="match status" value="2"/>
</dbReference>
<dbReference type="PROSITE" id="PS50106">
    <property type="entry name" value="PDZ"/>
    <property type="match status" value="2"/>
</dbReference>
<keyword id="KW-0145">Chemotaxis</keyword>
<keyword id="KW-0202">Cytokine</keyword>
<keyword id="KW-0963">Cytoplasm</keyword>
<keyword id="KW-0539">Nucleus</keyword>
<keyword id="KW-0597">Phosphoprotein</keyword>
<keyword id="KW-1185">Reference proteome</keyword>
<keyword id="KW-0677">Repeat</keyword>
<keyword id="KW-0964">Secreted</keyword>
<keyword id="KW-0804">Transcription</keyword>
<keyword id="KW-0805">Transcription regulation</keyword>
<gene>
    <name type="primary">IL16</name>
</gene>
<reference key="1">
    <citation type="journal article" date="1998" name="Immunogenetics">
        <title>Molecular cloning and sequence analysis of interleukin 16 from nonhuman primates and from the mouse.</title>
        <authorList>
            <person name="Bannert N."/>
            <person name="Adler H.S."/>
            <person name="Werner A."/>
            <person name="Baier M."/>
            <person name="Kurth R."/>
        </authorList>
    </citation>
    <scope>NUCLEOTIDE SEQUENCE [GENOMIC DNA]</scope>
</reference>
<proteinExistence type="inferred from homology"/>
<evidence type="ECO:0000250" key="1"/>
<evidence type="ECO:0000250" key="2">
    <source>
        <dbReference type="UniProtKB" id="Q14005"/>
    </source>
</evidence>
<evidence type="ECO:0000255" key="3">
    <source>
        <dbReference type="PROSITE-ProRule" id="PRU00143"/>
    </source>
</evidence>
<evidence type="ECO:0000256" key="4">
    <source>
        <dbReference type="SAM" id="MobiDB-lite"/>
    </source>
</evidence>
<evidence type="ECO:0000305" key="5"/>
<organism>
    <name type="scientific">Macaca fascicularis</name>
    <name type="common">Crab-eating macaque</name>
    <name type="synonym">Cynomolgus monkey</name>
    <dbReference type="NCBI Taxonomy" id="9541"/>
    <lineage>
        <taxon>Eukaryota</taxon>
        <taxon>Metazoa</taxon>
        <taxon>Chordata</taxon>
        <taxon>Craniata</taxon>
        <taxon>Vertebrata</taxon>
        <taxon>Euteleostomi</taxon>
        <taxon>Mammalia</taxon>
        <taxon>Eutheria</taxon>
        <taxon>Euarchontoglires</taxon>
        <taxon>Primates</taxon>
        <taxon>Haplorrhini</taxon>
        <taxon>Catarrhini</taxon>
        <taxon>Cercopithecidae</taxon>
        <taxon>Cercopithecinae</taxon>
        <taxon>Macaca</taxon>
    </lineage>
</organism>
<accession>O62676</accession>
<comment type="function">
    <text evidence="1">Interleukin-16 stimulates a migratory response in CD4+ lymphocytes, monocytes, and eosinophils. Primes CD4+ T-cells for IL-2 and IL-15 responsiveness. Also induces T-lymphocyte expression of interleukin 2 receptor. Ligand for CD4 (By similarity).</text>
</comment>
<comment type="function">
    <text evidence="1">Pro-interleukin-16 is involved in cell cycle progression in T-cells. Appears to be involved in transcriptional regulation of SKP2 and is probably part of a transcriptional repression complex on the core promoter of the SKP2 gene. May act as a scaffold for GABPB1 (the DNA-binding subunit the GABP transcription factor complex) and HDAC3 thus maintaining transcriptional repression and blocking cell cycle progression in resting T-cells (By similarity).</text>
</comment>
<comment type="subunit">
    <text evidence="1 5">Homotetramer (Probable). Pro-interleukin-16 interacts (via PDZ 2 domain) with PPP1R12A, PPP1R12B and PPP1R12C. Pro-interleukin-16 interacts with GRIN2A. Pro-interleukin-16 interacts with GABPB1. Pro-interleukin-16 interacts (via PDZ 3 domain) with HDAC3 (By similarity).</text>
</comment>
<comment type="subcellular location">
    <molecule>Interleukin-16</molecule>
    <subcellularLocation>
        <location evidence="1">Secreted</location>
    </subcellularLocation>
</comment>
<comment type="subcellular location">
    <molecule>Pro-interleukin-16</molecule>
    <subcellularLocation>
        <location>Cytoplasm</location>
    </subcellularLocation>
    <subcellularLocation>
        <location evidence="1">Nucleus</location>
    </subcellularLocation>
</comment>
<sequence>MDYSFDTTAEDPWVRISDCIKNLFSPIMSENPGHMPLQPNASLSEEDGTQGHPDGNPPKLDTANGTPKVYKSADRSTVKKGPPVAPKPAWFRQSLKGLRNRASDPRGLPDPALSTQPAPASREHLGPHIRASSSSSIKQRISSFETFGSSQLPDKGAQRLSLQPSSGEAAKPLGKHEGGRFSGLLGRGAAPTLVPQQPEQVLPSGSPAATEARDPGVSESPPPGLQPNQKTLPTGSDPLLRLLPTQTEKSQGPVLKMPSQRARSFPLTRSQSCETKLLDEKTSKLYSISSQVSSAVMKSLLCLPSSLSCAQTPCIPKEGASPTSSSNEDSAANGSAETSASDTGFSLNLSELREYTEGLTEAKEDDDGDHSSHQSGQSVISLLSSEELKQLIEEVKVLDEATLKQLDSIHVTILHKEEGAGLGFSLAGGADLENKVITVHKVFPNGLASQEGTIQKGNEVLSINGKSLKGTTHNDALAILRQAREPRQAVIVTRKLTAESMPDLNSTTDSAASASAASDVSVESSAEATVYTVTLEKMSAGLGFSLEGGKGSLHGDKPLTINRIFKGAASEQSETIQPGDEILQLAGTAMQGLTRFEAWNIIKALPDGPVTTVIRRKSLQPKETTAAADS</sequence>
<feature type="chain" id="PRO_0000377544" description="Pro-interleukin-16">
    <location>
        <begin position="1"/>
        <end position="630"/>
    </location>
</feature>
<feature type="chain" id="PRO_0000015414" description="Interleukin-16" evidence="1">
    <location>
        <begin position="510"/>
        <end position="630"/>
    </location>
</feature>
<feature type="domain" description="PDZ 1" evidence="3">
    <location>
        <begin position="410"/>
        <end position="495"/>
    </location>
</feature>
<feature type="domain" description="PDZ 2" evidence="3">
    <location>
        <begin position="532"/>
        <end position="617"/>
    </location>
</feature>
<feature type="region of interest" description="Disordered" evidence="4">
    <location>
        <begin position="30"/>
        <end position="268"/>
    </location>
</feature>
<feature type="region of interest" description="Disordered" evidence="4">
    <location>
        <begin position="316"/>
        <end position="343"/>
    </location>
</feature>
<feature type="region of interest" description="Interaction with PPP1R12A, PPP1R12B and PPP1R12C" evidence="1">
    <location>
        <begin position="404"/>
        <end position="500"/>
    </location>
</feature>
<feature type="compositionally biased region" description="Low complexity" evidence="4">
    <location>
        <begin position="129"/>
        <end position="143"/>
    </location>
</feature>
<feature type="compositionally biased region" description="Polar residues" evidence="4">
    <location>
        <begin position="321"/>
        <end position="343"/>
    </location>
</feature>
<feature type="modified residue" description="Phosphoserine" evidence="2">
    <location>
        <position position="220"/>
    </location>
</feature>
<protein>
    <recommendedName>
        <fullName>Pro-interleukin-16</fullName>
    </recommendedName>
    <component>
        <recommendedName>
            <fullName>Interleukin-16</fullName>
            <shortName>IL-16</shortName>
        </recommendedName>
        <alternativeName>
            <fullName>Lymphocyte chemoattractant factor</fullName>
            <shortName>LCF</shortName>
        </alternativeName>
    </component>
</protein>